<comment type="function">
    <text evidence="1">Required for maturation of 30S ribosomal subunits.</text>
</comment>
<comment type="subcellular location">
    <subcellularLocation>
        <location evidence="1">Cytoplasm</location>
    </subcellularLocation>
</comment>
<comment type="similarity">
    <text evidence="1">Belongs to the RimP family.</text>
</comment>
<comment type="sequence caution" evidence="3">
    <conflict type="erroneous initiation">
        <sequence resource="EMBL-CDS" id="ABB24635"/>
    </conflict>
</comment>
<reference key="1">
    <citation type="submission" date="2005-08" db="EMBL/GenBank/DDBJ databases">
        <title>Complete sequence of Pelodictyon luteolum DSM 273.</title>
        <authorList>
            <consortium name="US DOE Joint Genome Institute"/>
            <person name="Copeland A."/>
            <person name="Lucas S."/>
            <person name="Lapidus A."/>
            <person name="Barry K."/>
            <person name="Detter J.C."/>
            <person name="Glavina T."/>
            <person name="Hammon N."/>
            <person name="Israni S."/>
            <person name="Pitluck S."/>
            <person name="Bryant D."/>
            <person name="Schmutz J."/>
            <person name="Larimer F."/>
            <person name="Land M."/>
            <person name="Kyrpides N."/>
            <person name="Ivanova N."/>
            <person name="Richardson P."/>
        </authorList>
    </citation>
    <scope>NUCLEOTIDE SEQUENCE [LARGE SCALE GENOMIC DNA]</scope>
    <source>
        <strain>DSM 273 / BCRC 81028 / 2530</strain>
    </source>
</reference>
<name>RIMP_CHLL3</name>
<evidence type="ECO:0000255" key="1">
    <source>
        <dbReference type="HAMAP-Rule" id="MF_01077"/>
    </source>
</evidence>
<evidence type="ECO:0000256" key="2">
    <source>
        <dbReference type="SAM" id="MobiDB-lite"/>
    </source>
</evidence>
<evidence type="ECO:0000305" key="3"/>
<sequence length="176" mass="19298">MQGSIDSHIEGIVQNILEDSVGTKGEGVYLVAMTVKGSAVHRKIEVILDADSGVRIDQCSFFARRIRERLEEDEALSGTMGEDFDLVVGSPGLGEPLVLRRQYGRHVGRLLRVWYRDTEGVEHEVAGHLQAVSLTEGGGSITLKPQTAKKKGRQEETEDMTLELDAVSRAVPEAEI</sequence>
<proteinExistence type="inferred from homology"/>
<organism>
    <name type="scientific">Chlorobium luteolum (strain DSM 273 / BCRC 81028 / 2530)</name>
    <name type="common">Pelodictyon luteolum</name>
    <dbReference type="NCBI Taxonomy" id="319225"/>
    <lineage>
        <taxon>Bacteria</taxon>
        <taxon>Pseudomonadati</taxon>
        <taxon>Chlorobiota</taxon>
        <taxon>Chlorobiia</taxon>
        <taxon>Chlorobiales</taxon>
        <taxon>Chlorobiaceae</taxon>
        <taxon>Chlorobium/Pelodictyon group</taxon>
        <taxon>Pelodictyon</taxon>
    </lineage>
</organism>
<accession>Q3B1Z6</accession>
<gene>
    <name evidence="1" type="primary">rimP</name>
    <name type="ordered locus">Plut_1781</name>
</gene>
<dbReference type="EMBL" id="CP000096">
    <property type="protein sequence ID" value="ABB24635.1"/>
    <property type="status" value="ALT_INIT"/>
    <property type="molecule type" value="Genomic_DNA"/>
</dbReference>
<dbReference type="RefSeq" id="WP_049752383.1">
    <property type="nucleotide sequence ID" value="NC_007512.1"/>
</dbReference>
<dbReference type="SMR" id="Q3B1Z6"/>
<dbReference type="STRING" id="319225.Plut_1781"/>
<dbReference type="KEGG" id="plt:Plut_1781"/>
<dbReference type="eggNOG" id="COG0779">
    <property type="taxonomic scope" value="Bacteria"/>
</dbReference>
<dbReference type="HOGENOM" id="CLU_070525_3_1_10"/>
<dbReference type="OrthoDB" id="9789702at2"/>
<dbReference type="Proteomes" id="UP000002709">
    <property type="component" value="Chromosome"/>
</dbReference>
<dbReference type="GO" id="GO:0005829">
    <property type="term" value="C:cytosol"/>
    <property type="evidence" value="ECO:0007669"/>
    <property type="project" value="TreeGrafter"/>
</dbReference>
<dbReference type="GO" id="GO:0000028">
    <property type="term" value="P:ribosomal small subunit assembly"/>
    <property type="evidence" value="ECO:0007669"/>
    <property type="project" value="TreeGrafter"/>
</dbReference>
<dbReference type="GO" id="GO:0006412">
    <property type="term" value="P:translation"/>
    <property type="evidence" value="ECO:0007669"/>
    <property type="project" value="TreeGrafter"/>
</dbReference>
<dbReference type="Gene3D" id="3.30.300.70">
    <property type="entry name" value="RimP-like superfamily, N-terminal"/>
    <property type="match status" value="1"/>
</dbReference>
<dbReference type="HAMAP" id="MF_01077">
    <property type="entry name" value="RimP"/>
    <property type="match status" value="1"/>
</dbReference>
<dbReference type="InterPro" id="IPR003728">
    <property type="entry name" value="Ribosome_maturation_RimP"/>
</dbReference>
<dbReference type="InterPro" id="IPR028989">
    <property type="entry name" value="RimP_N"/>
</dbReference>
<dbReference type="InterPro" id="IPR035956">
    <property type="entry name" value="RimP_N_sf"/>
</dbReference>
<dbReference type="NCBIfam" id="NF011234">
    <property type="entry name" value="PRK14641.1"/>
    <property type="match status" value="1"/>
</dbReference>
<dbReference type="PANTHER" id="PTHR33867">
    <property type="entry name" value="RIBOSOME MATURATION FACTOR RIMP"/>
    <property type="match status" value="1"/>
</dbReference>
<dbReference type="PANTHER" id="PTHR33867:SF1">
    <property type="entry name" value="RIBOSOME MATURATION FACTOR RIMP"/>
    <property type="match status" value="1"/>
</dbReference>
<dbReference type="Pfam" id="PF02576">
    <property type="entry name" value="RimP_N"/>
    <property type="match status" value="1"/>
</dbReference>
<dbReference type="SUPFAM" id="SSF75420">
    <property type="entry name" value="YhbC-like, N-terminal domain"/>
    <property type="match status" value="1"/>
</dbReference>
<keyword id="KW-0963">Cytoplasm</keyword>
<keyword id="KW-1185">Reference proteome</keyword>
<keyword id="KW-0690">Ribosome biogenesis</keyword>
<protein>
    <recommendedName>
        <fullName evidence="1">Ribosome maturation factor RimP</fullName>
    </recommendedName>
</protein>
<feature type="chain" id="PRO_0000229260" description="Ribosome maturation factor RimP">
    <location>
        <begin position="1"/>
        <end position="176"/>
    </location>
</feature>
<feature type="region of interest" description="Disordered" evidence="2">
    <location>
        <begin position="143"/>
        <end position="176"/>
    </location>
</feature>